<protein>
    <recommendedName>
        <fullName>Probable protein phosphatase 2C 78</fullName>
        <shortName>AtPP2C78</shortName>
        <ecNumber evidence="2">3.1.3.16</ecNumber>
    </recommendedName>
    <alternativeName>
        <fullName evidence="9">Protein HIGHLY ABA-INDUCED 1</fullName>
    </alternativeName>
    <alternativeName>
        <fullName evidence="8">Protein SENESCENCE-ASSOCIATED GENE 113</fullName>
    </alternativeName>
</protein>
<feature type="chain" id="PRO_0000367997" description="Probable protein phosphatase 2C 78">
    <location>
        <begin position="1"/>
        <end position="413"/>
    </location>
</feature>
<feature type="domain" description="PPM-type phosphatase" evidence="2">
    <location>
        <begin position="111"/>
        <end position="409"/>
    </location>
</feature>
<feature type="region of interest" description="Disordered" evidence="3">
    <location>
        <begin position="21"/>
        <end position="40"/>
    </location>
</feature>
<feature type="binding site" evidence="1">
    <location>
        <position position="153"/>
    </location>
    <ligand>
        <name>Mn(2+)</name>
        <dbReference type="ChEBI" id="CHEBI:29035"/>
        <label>1</label>
    </ligand>
</feature>
<feature type="binding site" evidence="1">
    <location>
        <position position="153"/>
    </location>
    <ligand>
        <name>Mn(2+)</name>
        <dbReference type="ChEBI" id="CHEBI:29035"/>
        <label>2</label>
    </ligand>
</feature>
<feature type="binding site" evidence="1">
    <location>
        <position position="154"/>
    </location>
    <ligand>
        <name>Mn(2+)</name>
        <dbReference type="ChEBI" id="CHEBI:29035"/>
        <label>1</label>
    </ligand>
</feature>
<feature type="binding site" evidence="1">
    <location>
        <position position="327"/>
    </location>
    <ligand>
        <name>Mn(2+)</name>
        <dbReference type="ChEBI" id="CHEBI:29035"/>
        <label>2</label>
    </ligand>
</feature>
<feature type="binding site" evidence="1">
    <location>
        <position position="400"/>
    </location>
    <ligand>
        <name>Mn(2+)</name>
        <dbReference type="ChEBI" id="CHEBI:29035"/>
        <label>2</label>
    </ligand>
</feature>
<feature type="sequence conflict" description="In Ref. 3; AAL16163." evidence="10" ref="3">
    <original>L</original>
    <variation>F</variation>
    <location>
        <position position="103"/>
    </location>
</feature>
<dbReference type="EC" id="3.1.3.16" evidence="2"/>
<dbReference type="EMBL" id="AB016890">
    <property type="protein sequence ID" value="BAB09767.1"/>
    <property type="molecule type" value="Genomic_DNA"/>
</dbReference>
<dbReference type="EMBL" id="CP002688">
    <property type="protein sequence ID" value="AED97159.1"/>
    <property type="molecule type" value="Genomic_DNA"/>
</dbReference>
<dbReference type="EMBL" id="AF428395">
    <property type="protein sequence ID" value="AAL16163.1"/>
    <property type="molecule type" value="mRNA"/>
</dbReference>
<dbReference type="EMBL" id="AY054163">
    <property type="protein sequence ID" value="AAL06824.1"/>
    <property type="molecule type" value="mRNA"/>
</dbReference>
<dbReference type="EMBL" id="AY074555">
    <property type="protein sequence ID" value="AAL67095.1"/>
    <property type="molecule type" value="mRNA"/>
</dbReference>
<dbReference type="RefSeq" id="NP_200730.1">
    <property type="nucleotide sequence ID" value="NM_125312.3"/>
</dbReference>
<dbReference type="SMR" id="Q9FIF5"/>
<dbReference type="BioGRID" id="21284">
    <property type="interactions" value="38"/>
</dbReference>
<dbReference type="DIP" id="DIP-48992N"/>
<dbReference type="FunCoup" id="Q9FIF5">
    <property type="interactions" value="370"/>
</dbReference>
<dbReference type="IntAct" id="Q9FIF5">
    <property type="interactions" value="12"/>
</dbReference>
<dbReference type="STRING" id="3702.Q9FIF5"/>
<dbReference type="iPTMnet" id="Q9FIF5"/>
<dbReference type="PaxDb" id="3702-AT5G59220.1"/>
<dbReference type="ProteomicsDB" id="250920"/>
<dbReference type="EnsemblPlants" id="AT5G59220.1">
    <property type="protein sequence ID" value="AT5G59220.1"/>
    <property type="gene ID" value="AT5G59220"/>
</dbReference>
<dbReference type="GeneID" id="836040"/>
<dbReference type="Gramene" id="AT5G59220.1">
    <property type="protein sequence ID" value="AT5G59220.1"/>
    <property type="gene ID" value="AT5G59220"/>
</dbReference>
<dbReference type="KEGG" id="ath:AT5G59220"/>
<dbReference type="Araport" id="AT5G59220"/>
<dbReference type="TAIR" id="AT5G59220">
    <property type="gene designation" value="HAI1"/>
</dbReference>
<dbReference type="eggNOG" id="KOG0698">
    <property type="taxonomic scope" value="Eukaryota"/>
</dbReference>
<dbReference type="HOGENOM" id="CLU_013173_20_0_1"/>
<dbReference type="InParanoid" id="Q9FIF5"/>
<dbReference type="OMA" id="AVHPFFY"/>
<dbReference type="PhylomeDB" id="Q9FIF5"/>
<dbReference type="BRENDA" id="3.1.3.16">
    <property type="organism ID" value="399"/>
</dbReference>
<dbReference type="PRO" id="PR:Q9FIF5"/>
<dbReference type="Proteomes" id="UP000006548">
    <property type="component" value="Chromosome 5"/>
</dbReference>
<dbReference type="ExpressionAtlas" id="Q9FIF5">
    <property type="expression patterns" value="baseline and differential"/>
</dbReference>
<dbReference type="GO" id="GO:0033106">
    <property type="term" value="C:cis-Golgi network membrane"/>
    <property type="evidence" value="ECO:0000314"/>
    <property type="project" value="TAIR"/>
</dbReference>
<dbReference type="GO" id="GO:0005829">
    <property type="term" value="C:cytosol"/>
    <property type="evidence" value="ECO:0000314"/>
    <property type="project" value="TAIR"/>
</dbReference>
<dbReference type="GO" id="GO:0005794">
    <property type="term" value="C:Golgi apparatus"/>
    <property type="evidence" value="ECO:0000314"/>
    <property type="project" value="TAIR"/>
</dbReference>
<dbReference type="GO" id="GO:0005634">
    <property type="term" value="C:nucleus"/>
    <property type="evidence" value="ECO:0000314"/>
    <property type="project" value="TAIR"/>
</dbReference>
<dbReference type="GO" id="GO:0046872">
    <property type="term" value="F:metal ion binding"/>
    <property type="evidence" value="ECO:0007669"/>
    <property type="project" value="UniProtKB-KW"/>
</dbReference>
<dbReference type="GO" id="GO:0004722">
    <property type="term" value="F:protein serine/threonine phosphatase activity"/>
    <property type="evidence" value="ECO:0000316"/>
    <property type="project" value="TAIR"/>
</dbReference>
<dbReference type="GO" id="GO:0009658">
    <property type="term" value="P:chloroplast organization"/>
    <property type="evidence" value="ECO:0000315"/>
    <property type="project" value="TAIR"/>
</dbReference>
<dbReference type="GO" id="GO:0010150">
    <property type="term" value="P:leaf senescence"/>
    <property type="evidence" value="ECO:0000315"/>
    <property type="project" value="TAIR"/>
</dbReference>
<dbReference type="GO" id="GO:0009788">
    <property type="term" value="P:negative regulation of abscisic acid-activated signaling pathway"/>
    <property type="evidence" value="ECO:0000316"/>
    <property type="project" value="TAIR"/>
</dbReference>
<dbReference type="GO" id="GO:0009737">
    <property type="term" value="P:response to abscisic acid"/>
    <property type="evidence" value="ECO:0000270"/>
    <property type="project" value="TAIR"/>
</dbReference>
<dbReference type="GO" id="GO:0009414">
    <property type="term" value="P:response to water deprivation"/>
    <property type="evidence" value="ECO:0000270"/>
    <property type="project" value="TAIR"/>
</dbReference>
<dbReference type="GO" id="GO:0010118">
    <property type="term" value="P:stomatal movement"/>
    <property type="evidence" value="ECO:0000315"/>
    <property type="project" value="TAIR"/>
</dbReference>
<dbReference type="CDD" id="cd00143">
    <property type="entry name" value="PP2Cc"/>
    <property type="match status" value="1"/>
</dbReference>
<dbReference type="FunFam" id="3.60.40.10:FF:000065">
    <property type="entry name" value="Protein phosphatase 2C 37"/>
    <property type="match status" value="1"/>
</dbReference>
<dbReference type="Gene3D" id="3.60.40.10">
    <property type="entry name" value="PPM-type phosphatase domain"/>
    <property type="match status" value="1"/>
</dbReference>
<dbReference type="InterPro" id="IPR015655">
    <property type="entry name" value="PP2C"/>
</dbReference>
<dbReference type="InterPro" id="IPR036457">
    <property type="entry name" value="PPM-type-like_dom_sf"/>
</dbReference>
<dbReference type="InterPro" id="IPR001932">
    <property type="entry name" value="PPM-type_phosphatase-like_dom"/>
</dbReference>
<dbReference type="PANTHER" id="PTHR47992">
    <property type="entry name" value="PROTEIN PHOSPHATASE"/>
    <property type="match status" value="1"/>
</dbReference>
<dbReference type="Pfam" id="PF00481">
    <property type="entry name" value="PP2C"/>
    <property type="match status" value="1"/>
</dbReference>
<dbReference type="SMART" id="SM00331">
    <property type="entry name" value="PP2C_SIG"/>
    <property type="match status" value="1"/>
</dbReference>
<dbReference type="SMART" id="SM00332">
    <property type="entry name" value="PP2Cc"/>
    <property type="match status" value="1"/>
</dbReference>
<dbReference type="SUPFAM" id="SSF81606">
    <property type="entry name" value="PP2C-like"/>
    <property type="match status" value="1"/>
</dbReference>
<dbReference type="PROSITE" id="PS51746">
    <property type="entry name" value="PPM_2"/>
    <property type="match status" value="1"/>
</dbReference>
<keyword id="KW-0333">Golgi apparatus</keyword>
<keyword id="KW-0378">Hydrolase</keyword>
<keyword id="KW-0460">Magnesium</keyword>
<keyword id="KW-0464">Manganese</keyword>
<keyword id="KW-0479">Metal-binding</keyword>
<keyword id="KW-0539">Nucleus</keyword>
<keyword id="KW-0904">Protein phosphatase</keyword>
<keyword id="KW-1185">Reference proteome</keyword>
<reference key="1">
    <citation type="journal article" date="1998" name="DNA Res.">
        <title>Structural analysis of Arabidopsis thaliana chromosome 5. VIII. Sequence features of the regions of 1,081,958 bp covered by seventeen physically assigned P1 and TAC clones.</title>
        <authorList>
            <person name="Asamizu E."/>
            <person name="Sato S."/>
            <person name="Kaneko T."/>
            <person name="Nakamura Y."/>
            <person name="Kotani H."/>
            <person name="Miyajima N."/>
            <person name="Tabata S."/>
        </authorList>
    </citation>
    <scope>NUCLEOTIDE SEQUENCE [LARGE SCALE GENOMIC DNA]</scope>
    <source>
        <strain>cv. Columbia</strain>
    </source>
</reference>
<reference key="2">
    <citation type="journal article" date="2017" name="Plant J.">
        <title>Araport11: a complete reannotation of the Arabidopsis thaliana reference genome.</title>
        <authorList>
            <person name="Cheng C.Y."/>
            <person name="Krishnakumar V."/>
            <person name="Chan A.P."/>
            <person name="Thibaud-Nissen F."/>
            <person name="Schobel S."/>
            <person name="Town C.D."/>
        </authorList>
    </citation>
    <scope>GENOME REANNOTATION</scope>
    <source>
        <strain>cv. Columbia</strain>
    </source>
</reference>
<reference key="3">
    <citation type="journal article" date="2003" name="Science">
        <title>Empirical analysis of transcriptional activity in the Arabidopsis genome.</title>
        <authorList>
            <person name="Yamada K."/>
            <person name="Lim J."/>
            <person name="Dale J.M."/>
            <person name="Chen H."/>
            <person name="Shinn P."/>
            <person name="Palm C.J."/>
            <person name="Southwick A.M."/>
            <person name="Wu H.C."/>
            <person name="Kim C.J."/>
            <person name="Nguyen M."/>
            <person name="Pham P.K."/>
            <person name="Cheuk R.F."/>
            <person name="Karlin-Newmann G."/>
            <person name="Liu S.X."/>
            <person name="Lam B."/>
            <person name="Sakano H."/>
            <person name="Wu T."/>
            <person name="Yu G."/>
            <person name="Miranda M."/>
            <person name="Quach H.L."/>
            <person name="Tripp M."/>
            <person name="Chang C.H."/>
            <person name="Lee J.M."/>
            <person name="Toriumi M.J."/>
            <person name="Chan M.M."/>
            <person name="Tang C.C."/>
            <person name="Onodera C.S."/>
            <person name="Deng J.M."/>
            <person name="Akiyama K."/>
            <person name="Ansari Y."/>
            <person name="Arakawa T."/>
            <person name="Banh J."/>
            <person name="Banno F."/>
            <person name="Bowser L."/>
            <person name="Brooks S.Y."/>
            <person name="Carninci P."/>
            <person name="Chao Q."/>
            <person name="Choy N."/>
            <person name="Enju A."/>
            <person name="Goldsmith A.D."/>
            <person name="Gurjal M."/>
            <person name="Hansen N.F."/>
            <person name="Hayashizaki Y."/>
            <person name="Johnson-Hopson C."/>
            <person name="Hsuan V.W."/>
            <person name="Iida K."/>
            <person name="Karnes M."/>
            <person name="Khan S."/>
            <person name="Koesema E."/>
            <person name="Ishida J."/>
            <person name="Jiang P.X."/>
            <person name="Jones T."/>
            <person name="Kawai J."/>
            <person name="Kamiya A."/>
            <person name="Meyers C."/>
            <person name="Nakajima M."/>
            <person name="Narusaka M."/>
            <person name="Seki M."/>
            <person name="Sakurai T."/>
            <person name="Satou M."/>
            <person name="Tamse R."/>
            <person name="Vaysberg M."/>
            <person name="Wallender E.K."/>
            <person name="Wong C."/>
            <person name="Yamamura Y."/>
            <person name="Yuan S."/>
            <person name="Shinozaki K."/>
            <person name="Davis R.W."/>
            <person name="Theologis A."/>
            <person name="Ecker J.R."/>
        </authorList>
    </citation>
    <scope>NUCLEOTIDE SEQUENCE [LARGE SCALE MRNA]</scope>
    <source>
        <strain>cv. Columbia</strain>
    </source>
</reference>
<reference key="4">
    <citation type="journal article" date="2008" name="BMC Genomics">
        <title>Genome-wide and expression analysis of protein phosphatase 2C in rice and Arabidopsis.</title>
        <authorList>
            <person name="Xue T."/>
            <person name="Wang D."/>
            <person name="Zhang S."/>
            <person name="Ehlting J."/>
            <person name="Ni F."/>
            <person name="Jacab S."/>
            <person name="Zheng C."/>
            <person name="Zhong Y."/>
        </authorList>
    </citation>
    <scope>GENE FAMILY</scope>
    <scope>NOMENCLATURE</scope>
</reference>
<reference key="5">
    <citation type="journal article" date="2012" name="Plant J.">
        <title>An ABA-regulated and Golgi-localized protein phosphatase controls water loss during leaf senescence in Arabidopsis.</title>
        <authorList>
            <person name="Zhang K."/>
            <person name="Xia X."/>
            <person name="Zhang Y."/>
            <person name="Gan S.S."/>
        </authorList>
    </citation>
    <scope>FUNCTION</scope>
    <scope>SUBCELLULAR LOCATION</scope>
    <scope>INDUCTION</scope>
    <scope>DISRUPTION PHENOTYPE</scope>
</reference>
<reference key="6">
    <citation type="journal article" date="2012" name="Plant Physiol.">
        <title>An abscisic acid-AtNAP transcription factor-SAG113 protein phosphatase 2C regulatory chain for controlling dehydration in senescing Arabidopsis leaves.</title>
        <authorList>
            <person name="Zhang K."/>
            <person name="Gan S.S."/>
        </authorList>
    </citation>
    <scope>FUNCTION</scope>
</reference>
<reference key="7">
    <citation type="journal article" date="2012" name="Plant Physiol.">
        <title>Selective inhibition of clade A phosphatases type 2C by PYR/PYL/RCAR abscisic acid receptors.</title>
        <authorList>
            <person name="Antoni R."/>
            <person name="Gonzalez-Guzman M."/>
            <person name="Rodriguez L."/>
            <person name="Rodrigues A."/>
            <person name="Pizzio G.A."/>
            <person name="Rodriguez P.L."/>
        </authorList>
    </citation>
    <scope>FUNCTION</scope>
    <scope>SUBCELLULAR LOCATION</scope>
    <scope>INDUCTION</scope>
</reference>
<reference key="8">
    <citation type="journal article" date="2012" name="Plant Physiol.">
        <title>Unique drought resistance functions of the highly ABA-induced clade A protein phosphatase 2Cs.</title>
        <authorList>
            <person name="Bhaskara G.B."/>
            <person name="Nguyen T.T."/>
            <person name="Verslues P.E."/>
        </authorList>
    </citation>
    <scope>FUNCTION</scope>
    <scope>SUBCELLULAR LOCATION</scope>
</reference>
<gene>
    <name evidence="8" type="primary">SAG113</name>
    <name evidence="9" type="synonym">HAI1</name>
    <name type="ordered locus">At5g59220</name>
    <name type="ORF">MNC17.110</name>
</gene>
<comment type="function">
    <text evidence="4 5 6 7">Acts as a negative regulator of abscisic acid (ABA) signaling for stomatal closure in leaves, and controls water loss during leaf senescence (PubMed:22007837, PubMed:22184656). Activated by the NAC029/NAP transcription factor during ABA signaling in senescing leaves (PubMed:22184656). Functions as a negative regulator of osmotic stress and ABA signaling (PubMed:22198272). Acts as a negative regulator of response to drought (PubMed:22829320).</text>
</comment>
<comment type="catalytic activity">
    <reaction evidence="2">
        <text>O-phospho-L-seryl-[protein] + H2O = L-seryl-[protein] + phosphate</text>
        <dbReference type="Rhea" id="RHEA:20629"/>
        <dbReference type="Rhea" id="RHEA-COMP:9863"/>
        <dbReference type="Rhea" id="RHEA-COMP:11604"/>
        <dbReference type="ChEBI" id="CHEBI:15377"/>
        <dbReference type="ChEBI" id="CHEBI:29999"/>
        <dbReference type="ChEBI" id="CHEBI:43474"/>
        <dbReference type="ChEBI" id="CHEBI:83421"/>
        <dbReference type="EC" id="3.1.3.16"/>
    </reaction>
</comment>
<comment type="catalytic activity">
    <reaction evidence="2">
        <text>O-phospho-L-threonyl-[protein] + H2O = L-threonyl-[protein] + phosphate</text>
        <dbReference type="Rhea" id="RHEA:47004"/>
        <dbReference type="Rhea" id="RHEA-COMP:11060"/>
        <dbReference type="Rhea" id="RHEA-COMP:11605"/>
        <dbReference type="ChEBI" id="CHEBI:15377"/>
        <dbReference type="ChEBI" id="CHEBI:30013"/>
        <dbReference type="ChEBI" id="CHEBI:43474"/>
        <dbReference type="ChEBI" id="CHEBI:61977"/>
        <dbReference type="EC" id="3.1.3.16"/>
    </reaction>
</comment>
<comment type="cofactor">
    <cofactor evidence="2">
        <name>Mg(2+)</name>
        <dbReference type="ChEBI" id="CHEBI:18420"/>
    </cofactor>
    <cofactor evidence="2">
        <name>Mn(2+)</name>
        <dbReference type="ChEBI" id="CHEBI:29035"/>
    </cofactor>
    <text evidence="2">Binds 2 magnesium or manganese ions per subunit.</text>
</comment>
<comment type="interaction">
    <interactant intactId="EBI-2363373">
        <id>Q9FIF5</id>
    </interactant>
    <interactant intactId="EBI-4456633">
        <id>Q9SJ60</id>
        <label>At2g35900</label>
    </interactant>
    <organismsDiffer>false</organismsDiffer>
    <experiments>3</experiments>
</comment>
<comment type="interaction">
    <interactant intactId="EBI-2363373">
        <id>Q9FIF5</id>
    </interactant>
    <interactant intactId="EBI-2363213">
        <id>Q8H1R0</id>
        <label>PYL10</label>
    </interactant>
    <organismsDiffer>false</organismsDiffer>
    <experiments>3</experiments>
</comment>
<comment type="interaction">
    <interactant intactId="EBI-2363373">
        <id>Q9FIF5</id>
    </interactant>
    <interactant intactId="EBI-2429535">
        <id>Q9FGM1</id>
        <label>PYL8</label>
    </interactant>
    <organismsDiffer>false</organismsDiffer>
    <experiments>5</experiments>
</comment>
<comment type="interaction">
    <interactant intactId="EBI-2363373">
        <id>Q9FIF5</id>
    </interactant>
    <interactant intactId="EBI-25520978">
        <id>Q9LJ97</id>
        <label>RAB28</label>
    </interactant>
    <organismsDiffer>false</organismsDiffer>
    <experiments>3</experiments>
</comment>
<comment type="interaction">
    <interactant intactId="EBI-2363373">
        <id>Q9FIF5</id>
    </interactant>
    <interactant intactId="EBI-4425188">
        <id>Q93ZY2</id>
        <label>ROPGEF1</label>
    </interactant>
    <organismsDiffer>false</organismsDiffer>
    <experiments>2</experiments>
</comment>
<comment type="interaction">
    <interactant intactId="EBI-2363373">
        <id>Q9FIF5</id>
    </interactant>
    <interactant intactId="EBI-782514">
        <id>Q940H6</id>
        <label>SRK2E</label>
    </interactant>
    <organismsDiffer>false</organismsDiffer>
    <experiments>2</experiments>
</comment>
<comment type="subcellular location">
    <subcellularLocation>
        <location evidence="4">Golgi apparatus</location>
    </subcellularLocation>
    <subcellularLocation>
        <location evidence="6 7">Nucleus</location>
    </subcellularLocation>
</comment>
<comment type="induction">
    <text evidence="4 6">By abscisic acid (ABA) (PubMed:22007837, PubMed:22198272). Induced during leaf senescence (PubMed:22007837). Induced by osmotic stress (PubMed:22198272).</text>
</comment>
<comment type="disruption phenotype">
    <text evidence="4">Delayed senescence. Increased sensitivity to abscisic acid (ABA).</text>
</comment>
<comment type="similarity">
    <text evidence="10">Belongs to the PP2C family.</text>
</comment>
<sequence length="413" mass="45538">MAEICYENETMMIETTATVVKKATTTTRRRERSSSQAARRRRMEIRRFKFVSGEQEPVFVDGDLQRRRRRESTVAASTSTVFYETAKEVVVLCESLSSTVVALPDPEAYPKYGVASVCGRRREMEDAVAVHPFFSRHQTEYSSTGFHYCGVYDGHGCSHVAMKCRERLHELVREEFEADADWEKSMARSFTRMDMEVVALNADGAAKCRCELQRPDCDAVGSTAVVSVLTPEKIIVANCGDSRAVLCRNGKAIALSSDHKPDRPDELDRIQAAGGRVIYWDGPRVLGVLAMSRAIGDNYLKPYVISRPEVTVTDRANGDDFLILASDGLWDVVSNETACSVVRMCLRGKVNGQVSSSPEREMTGVGAGNVVVGGGDLPDKACEEASLLLTRLALARQSSDNVSVVVVDLRRDT</sequence>
<accession>Q9FIF5</accession>
<accession>Q944I7</accession>
<proteinExistence type="evidence at protein level"/>
<name>P2C78_ARATH</name>
<evidence type="ECO:0000250" key="1"/>
<evidence type="ECO:0000255" key="2">
    <source>
        <dbReference type="PROSITE-ProRule" id="PRU01082"/>
    </source>
</evidence>
<evidence type="ECO:0000256" key="3">
    <source>
        <dbReference type="SAM" id="MobiDB-lite"/>
    </source>
</evidence>
<evidence type="ECO:0000269" key="4">
    <source>
    </source>
</evidence>
<evidence type="ECO:0000269" key="5">
    <source>
    </source>
</evidence>
<evidence type="ECO:0000269" key="6">
    <source>
    </source>
</evidence>
<evidence type="ECO:0000269" key="7">
    <source>
    </source>
</evidence>
<evidence type="ECO:0000303" key="8">
    <source>
    </source>
</evidence>
<evidence type="ECO:0000303" key="9">
    <source>
    </source>
</evidence>
<evidence type="ECO:0000305" key="10"/>
<organism>
    <name type="scientific">Arabidopsis thaliana</name>
    <name type="common">Mouse-ear cress</name>
    <dbReference type="NCBI Taxonomy" id="3702"/>
    <lineage>
        <taxon>Eukaryota</taxon>
        <taxon>Viridiplantae</taxon>
        <taxon>Streptophyta</taxon>
        <taxon>Embryophyta</taxon>
        <taxon>Tracheophyta</taxon>
        <taxon>Spermatophyta</taxon>
        <taxon>Magnoliopsida</taxon>
        <taxon>eudicotyledons</taxon>
        <taxon>Gunneridae</taxon>
        <taxon>Pentapetalae</taxon>
        <taxon>rosids</taxon>
        <taxon>malvids</taxon>
        <taxon>Brassicales</taxon>
        <taxon>Brassicaceae</taxon>
        <taxon>Camelineae</taxon>
        <taxon>Arabidopsis</taxon>
    </lineage>
</organism>